<keyword id="KW-0686">Riboflavin biosynthesis</keyword>
<keyword id="KW-0808">Transferase</keyword>
<accession>B5E6C6</accession>
<dbReference type="EC" id="2.5.1.78" evidence="1"/>
<dbReference type="EMBL" id="CP001015">
    <property type="protein sequence ID" value="ACF55535.1"/>
    <property type="molecule type" value="Genomic_DNA"/>
</dbReference>
<dbReference type="SMR" id="B5E6C6"/>
<dbReference type="KEGG" id="spx:SPG_0166"/>
<dbReference type="HOGENOM" id="CLU_089358_1_1_9"/>
<dbReference type="UniPathway" id="UPA00275">
    <property type="reaction ID" value="UER00404"/>
</dbReference>
<dbReference type="GO" id="GO:0005829">
    <property type="term" value="C:cytosol"/>
    <property type="evidence" value="ECO:0007669"/>
    <property type="project" value="TreeGrafter"/>
</dbReference>
<dbReference type="GO" id="GO:0009349">
    <property type="term" value="C:riboflavin synthase complex"/>
    <property type="evidence" value="ECO:0007669"/>
    <property type="project" value="InterPro"/>
</dbReference>
<dbReference type="GO" id="GO:0000906">
    <property type="term" value="F:6,7-dimethyl-8-ribityllumazine synthase activity"/>
    <property type="evidence" value="ECO:0007669"/>
    <property type="project" value="UniProtKB-UniRule"/>
</dbReference>
<dbReference type="GO" id="GO:0009231">
    <property type="term" value="P:riboflavin biosynthetic process"/>
    <property type="evidence" value="ECO:0007669"/>
    <property type="project" value="UniProtKB-UniRule"/>
</dbReference>
<dbReference type="CDD" id="cd09209">
    <property type="entry name" value="Lumazine_synthase-I"/>
    <property type="match status" value="1"/>
</dbReference>
<dbReference type="FunFam" id="3.40.50.960:FF:000001">
    <property type="entry name" value="6,7-dimethyl-8-ribityllumazine synthase"/>
    <property type="match status" value="1"/>
</dbReference>
<dbReference type="Gene3D" id="3.40.50.960">
    <property type="entry name" value="Lumazine/riboflavin synthase"/>
    <property type="match status" value="1"/>
</dbReference>
<dbReference type="HAMAP" id="MF_00178">
    <property type="entry name" value="Lumazine_synth"/>
    <property type="match status" value="1"/>
</dbReference>
<dbReference type="InterPro" id="IPR034964">
    <property type="entry name" value="LS"/>
</dbReference>
<dbReference type="InterPro" id="IPR002180">
    <property type="entry name" value="LS/RS"/>
</dbReference>
<dbReference type="InterPro" id="IPR036467">
    <property type="entry name" value="LS/RS_sf"/>
</dbReference>
<dbReference type="NCBIfam" id="TIGR00114">
    <property type="entry name" value="lumazine-synth"/>
    <property type="match status" value="1"/>
</dbReference>
<dbReference type="NCBIfam" id="NF000812">
    <property type="entry name" value="PRK00061.1-4"/>
    <property type="match status" value="1"/>
</dbReference>
<dbReference type="PANTHER" id="PTHR21058:SF0">
    <property type="entry name" value="6,7-DIMETHYL-8-RIBITYLLUMAZINE SYNTHASE"/>
    <property type="match status" value="1"/>
</dbReference>
<dbReference type="PANTHER" id="PTHR21058">
    <property type="entry name" value="6,7-DIMETHYL-8-RIBITYLLUMAZINE SYNTHASE DMRL SYNTHASE LUMAZINE SYNTHASE"/>
    <property type="match status" value="1"/>
</dbReference>
<dbReference type="Pfam" id="PF00885">
    <property type="entry name" value="DMRL_synthase"/>
    <property type="match status" value="1"/>
</dbReference>
<dbReference type="SUPFAM" id="SSF52121">
    <property type="entry name" value="Lumazine synthase"/>
    <property type="match status" value="1"/>
</dbReference>
<reference key="1">
    <citation type="journal article" date="2001" name="Microb. Drug Resist.">
        <title>Annotated draft genomic sequence from a Streptococcus pneumoniae type 19F clinical isolate.</title>
        <authorList>
            <person name="Dopazo J."/>
            <person name="Mendoza A."/>
            <person name="Herrero J."/>
            <person name="Caldara F."/>
            <person name="Humbert Y."/>
            <person name="Friedli L."/>
            <person name="Guerrier M."/>
            <person name="Grand-Schenk E."/>
            <person name="Gandin C."/>
            <person name="de Francesco M."/>
            <person name="Polissi A."/>
            <person name="Buell G."/>
            <person name="Feger G."/>
            <person name="Garcia E."/>
            <person name="Peitsch M."/>
            <person name="Garcia-Bustos J.F."/>
        </authorList>
    </citation>
    <scope>NUCLEOTIDE SEQUENCE [LARGE SCALE GENOMIC DNA]</scope>
    <source>
        <strain>G54</strain>
    </source>
</reference>
<reference key="2">
    <citation type="submission" date="2008-03" db="EMBL/GenBank/DDBJ databases">
        <title>Pneumococcal beta glucoside metabolism investigated by whole genome comparison.</title>
        <authorList>
            <person name="Mulas L."/>
            <person name="Trappetti C."/>
            <person name="Hakenbeck R."/>
            <person name="Iannelli F."/>
            <person name="Pozzi G."/>
            <person name="Davidsen T.M."/>
            <person name="Tettelin H."/>
            <person name="Oggioni M."/>
        </authorList>
    </citation>
    <scope>NUCLEOTIDE SEQUENCE [LARGE SCALE GENOMIC DNA]</scope>
    <source>
        <strain>G54</strain>
    </source>
</reference>
<proteinExistence type="inferred from homology"/>
<evidence type="ECO:0000255" key="1">
    <source>
        <dbReference type="HAMAP-Rule" id="MF_00178"/>
    </source>
</evidence>
<organism>
    <name type="scientific">Streptococcus pneumoniae serotype 19F (strain G54)</name>
    <dbReference type="NCBI Taxonomy" id="512566"/>
    <lineage>
        <taxon>Bacteria</taxon>
        <taxon>Bacillati</taxon>
        <taxon>Bacillota</taxon>
        <taxon>Bacilli</taxon>
        <taxon>Lactobacillales</taxon>
        <taxon>Streptococcaceae</taxon>
        <taxon>Streptococcus</taxon>
    </lineage>
</organism>
<gene>
    <name evidence="1" type="primary">ribH</name>
    <name type="ordered locus">SPG_0166</name>
</gene>
<name>RISB_STRP4</name>
<protein>
    <recommendedName>
        <fullName evidence="1">6,7-dimethyl-8-ribityllumazine synthase</fullName>
        <shortName evidence="1">DMRL synthase</shortName>
        <shortName evidence="1">LS</shortName>
        <shortName evidence="1">Lumazine synthase</shortName>
        <ecNumber evidence="1">2.5.1.78</ecNumber>
    </recommendedName>
</protein>
<sequence length="155" mass="16752">MNTYEGNLVANNIKIGIVVARFNEFITSKLLSGALDNLKRENVNEKDIEVAWVPGAFEIPLIASKMAKSKKYDAIICLGAVIRGNTSHYDYVCSEVSKGIAQISLNSEIPVMFGVLTTDTIEQAIERAGTKAGNKGSECAQGAIEMVNLIRTLDA</sequence>
<comment type="function">
    <text evidence="1">Catalyzes the formation of 6,7-dimethyl-8-ribityllumazine by condensation of 5-amino-6-(D-ribitylamino)uracil with 3,4-dihydroxy-2-butanone 4-phosphate. This is the penultimate step in the biosynthesis of riboflavin.</text>
</comment>
<comment type="catalytic activity">
    <reaction evidence="1">
        <text>(2S)-2-hydroxy-3-oxobutyl phosphate + 5-amino-6-(D-ribitylamino)uracil = 6,7-dimethyl-8-(1-D-ribityl)lumazine + phosphate + 2 H2O + H(+)</text>
        <dbReference type="Rhea" id="RHEA:26152"/>
        <dbReference type="ChEBI" id="CHEBI:15377"/>
        <dbReference type="ChEBI" id="CHEBI:15378"/>
        <dbReference type="ChEBI" id="CHEBI:15934"/>
        <dbReference type="ChEBI" id="CHEBI:43474"/>
        <dbReference type="ChEBI" id="CHEBI:58201"/>
        <dbReference type="ChEBI" id="CHEBI:58830"/>
        <dbReference type="EC" id="2.5.1.78"/>
    </reaction>
</comment>
<comment type="pathway">
    <text evidence="1">Cofactor biosynthesis; riboflavin biosynthesis; riboflavin from 2-hydroxy-3-oxobutyl phosphate and 5-amino-6-(D-ribitylamino)uracil: step 1/2.</text>
</comment>
<comment type="similarity">
    <text evidence="1">Belongs to the DMRL synthase family.</text>
</comment>
<feature type="chain" id="PRO_1000098236" description="6,7-dimethyl-8-ribityllumazine synthase">
    <location>
        <begin position="1"/>
        <end position="155"/>
    </location>
</feature>
<feature type="active site" description="Proton donor" evidence="1">
    <location>
        <position position="88"/>
    </location>
</feature>
<feature type="binding site" evidence="1">
    <location>
        <position position="22"/>
    </location>
    <ligand>
        <name>5-amino-6-(D-ribitylamino)uracil</name>
        <dbReference type="ChEBI" id="CHEBI:15934"/>
    </ligand>
</feature>
<feature type="binding site" evidence="1">
    <location>
        <begin position="56"/>
        <end position="58"/>
    </location>
    <ligand>
        <name>5-amino-6-(D-ribitylamino)uracil</name>
        <dbReference type="ChEBI" id="CHEBI:15934"/>
    </ligand>
</feature>
<feature type="binding site" evidence="1">
    <location>
        <begin position="80"/>
        <end position="82"/>
    </location>
    <ligand>
        <name>5-amino-6-(D-ribitylamino)uracil</name>
        <dbReference type="ChEBI" id="CHEBI:15934"/>
    </ligand>
</feature>
<feature type="binding site" evidence="1">
    <location>
        <begin position="85"/>
        <end position="86"/>
    </location>
    <ligand>
        <name>(2S)-2-hydroxy-3-oxobutyl phosphate</name>
        <dbReference type="ChEBI" id="CHEBI:58830"/>
    </ligand>
</feature>
<feature type="binding site" evidence="1">
    <location>
        <position position="113"/>
    </location>
    <ligand>
        <name>5-amino-6-(D-ribitylamino)uracil</name>
        <dbReference type="ChEBI" id="CHEBI:15934"/>
    </ligand>
</feature>
<feature type="binding site" evidence="1">
    <location>
        <position position="127"/>
    </location>
    <ligand>
        <name>(2S)-2-hydroxy-3-oxobutyl phosphate</name>
        <dbReference type="ChEBI" id="CHEBI:58830"/>
    </ligand>
</feature>